<evidence type="ECO:0000250" key="1"/>
<evidence type="ECO:0000269" key="2">
    <source>
    </source>
</evidence>
<evidence type="ECO:0000305" key="3"/>
<dbReference type="EC" id="3.1.21.-"/>
<dbReference type="EMBL" id="M88172">
    <property type="protein sequence ID" value="AAA35223.1"/>
    <property type="molecule type" value="Genomic_DNA"/>
</dbReference>
<dbReference type="EMBL" id="Z49260">
    <property type="protein sequence ID" value="CAA89245.1"/>
    <property type="molecule type" value="Genomic_DNA"/>
</dbReference>
<dbReference type="EMBL" id="AY692731">
    <property type="protein sequence ID" value="AAT92750.1"/>
    <property type="molecule type" value="Genomic_DNA"/>
</dbReference>
<dbReference type="EMBL" id="BK006946">
    <property type="protein sequence ID" value="DAA10162.2"/>
    <property type="molecule type" value="Genomic_DNA"/>
</dbReference>
<dbReference type="PIR" id="S54474">
    <property type="entry name" value="S54474"/>
</dbReference>
<dbReference type="RefSeq" id="NP_013989.2">
    <property type="nucleotide sequence ID" value="NM_001182769.2"/>
</dbReference>
<dbReference type="SMR" id="P38430"/>
<dbReference type="BioGRID" id="35440">
    <property type="interactions" value="47"/>
</dbReference>
<dbReference type="FunCoup" id="P38430">
    <property type="interactions" value="87"/>
</dbReference>
<dbReference type="IntAct" id="P38430">
    <property type="interactions" value="5"/>
</dbReference>
<dbReference type="STRING" id="4932.YMR262W"/>
<dbReference type="PaxDb" id="4932-YMR262W"/>
<dbReference type="PeptideAtlas" id="P38430"/>
<dbReference type="EnsemblFungi" id="YMR262W_mRNA">
    <property type="protein sequence ID" value="YMR262W"/>
    <property type="gene ID" value="YMR262W"/>
</dbReference>
<dbReference type="GeneID" id="855304"/>
<dbReference type="KEGG" id="sce:YMR262W"/>
<dbReference type="AGR" id="SGD:S000004875"/>
<dbReference type="SGD" id="S000004875">
    <property type="gene designation" value="YMR262W"/>
</dbReference>
<dbReference type="VEuPathDB" id="FungiDB:YMR262W"/>
<dbReference type="eggNOG" id="KOG3020">
    <property type="taxonomic scope" value="Eukaryota"/>
</dbReference>
<dbReference type="GeneTree" id="ENSGT00720000108846"/>
<dbReference type="HOGENOM" id="CLU_031506_3_1_1"/>
<dbReference type="InParanoid" id="P38430"/>
<dbReference type="OMA" id="VPCFGWH"/>
<dbReference type="OrthoDB" id="413993at2759"/>
<dbReference type="BioCyc" id="YEAST:G3O-32936-MONOMER"/>
<dbReference type="BioGRID-ORCS" id="855304">
    <property type="hits" value="2 hits in 10 CRISPR screens"/>
</dbReference>
<dbReference type="PRO" id="PR:P38430"/>
<dbReference type="Proteomes" id="UP000002311">
    <property type="component" value="Chromosome XIII"/>
</dbReference>
<dbReference type="RNAct" id="P38430">
    <property type="molecule type" value="protein"/>
</dbReference>
<dbReference type="GO" id="GO:0046872">
    <property type="term" value="F:metal ion binding"/>
    <property type="evidence" value="ECO:0007669"/>
    <property type="project" value="UniProtKB-KW"/>
</dbReference>
<dbReference type="GO" id="GO:0004518">
    <property type="term" value="F:nuclease activity"/>
    <property type="evidence" value="ECO:0007669"/>
    <property type="project" value="UniProtKB-KW"/>
</dbReference>
<dbReference type="Gene3D" id="3.20.20.140">
    <property type="entry name" value="Metal-dependent hydrolases"/>
    <property type="match status" value="1"/>
</dbReference>
<dbReference type="InterPro" id="IPR018228">
    <property type="entry name" value="DNase_TatD-rel_CS"/>
</dbReference>
<dbReference type="InterPro" id="IPR032466">
    <property type="entry name" value="Metal_Hydrolase"/>
</dbReference>
<dbReference type="InterPro" id="IPR053044">
    <property type="entry name" value="Metallo-hydrolase/TatD-type"/>
</dbReference>
<dbReference type="InterPro" id="IPR001130">
    <property type="entry name" value="TatD-like"/>
</dbReference>
<dbReference type="PANTHER" id="PTHR47345">
    <property type="entry name" value="CUT9-INTERACTING PROTEIN SCN1"/>
    <property type="match status" value="1"/>
</dbReference>
<dbReference type="PANTHER" id="PTHR47345:SF1">
    <property type="entry name" value="CUT9-INTERACTING PROTEIN SCN1"/>
    <property type="match status" value="1"/>
</dbReference>
<dbReference type="Pfam" id="PF01026">
    <property type="entry name" value="TatD_DNase"/>
    <property type="match status" value="1"/>
</dbReference>
<dbReference type="PIRSF" id="PIRSF005902">
    <property type="entry name" value="DNase_TatD"/>
    <property type="match status" value="1"/>
</dbReference>
<dbReference type="SUPFAM" id="SSF51556">
    <property type="entry name" value="Metallo-dependent hydrolases"/>
    <property type="match status" value="1"/>
</dbReference>
<dbReference type="PROSITE" id="PS01091">
    <property type="entry name" value="TATD_3"/>
    <property type="match status" value="1"/>
</dbReference>
<keyword id="KW-0378">Hydrolase</keyword>
<keyword id="KW-0479">Metal-binding</keyword>
<keyword id="KW-0540">Nuclease</keyword>
<keyword id="KW-1185">Reference proteome</keyword>
<sequence length="313" mass="36032">MNKLVDAHCHVITDPDNTFCGDDGGSQGTLRCVMSSNPYDWNNLKKLAGRSTSKNDICVGFGVHPWYSHLFYVGSRRDKVSHYQDVLEYKNEEQFDSLVQVLPEPLDLEEYIKREFNDTLVSVIGEIGLDKLFRLPANGFYMQNEKARLTTVKVKLSHQETVFRRFCRLARHTSKPISIHDVKCHGKLNDICNEELLTYHSVKICLHSYTGSKETLLGQWLKKFPPDRIFVSLSKWINFKDPEEGDALVRSLPSTCILTETDYPIDNPDPSYQKALTEQLQYLNAQIARAWDETLDASQAALRVYENFQKFIK</sequence>
<comment type="function">
    <text evidence="1">Putative deoxyribonuclease.</text>
</comment>
<comment type="cofactor">
    <cofactor evidence="1">
        <name>a divalent metal cation</name>
        <dbReference type="ChEBI" id="CHEBI:60240"/>
    </cofactor>
    <text evidence="1">Binds 2 divalent metal cations per subunit.</text>
</comment>
<comment type="miscellaneous">
    <text evidence="2">Present with 125 molecules/cell in log phase SD medium.</text>
</comment>
<comment type="similarity">
    <text evidence="3">Belongs to the metallo-dependent hydrolases superfamily. TatD-type hydrolase family.</text>
</comment>
<accession>P38430</accession>
<accession>D6W088</accession>
<accession>Q6B2J9</accession>
<gene>
    <name type="ordered locus">YMR262W</name>
    <name type="ORF">YM8156.04</name>
</gene>
<feature type="chain" id="PRO_0000203344" description="Uncharacterized deoxyribonuclease YMR262W">
    <location>
        <begin position="1"/>
        <end position="313"/>
    </location>
</feature>
<feature type="binding site" evidence="1">
    <location>
        <position position="8"/>
    </location>
    <ligand>
        <name>a divalent metal cation</name>
        <dbReference type="ChEBI" id="CHEBI:60240"/>
        <label>1</label>
    </ligand>
</feature>
<feature type="binding site" evidence="1">
    <location>
        <position position="10"/>
    </location>
    <ligand>
        <name>a divalent metal cation</name>
        <dbReference type="ChEBI" id="CHEBI:60240"/>
        <label>1</label>
    </ligand>
</feature>
<feature type="binding site" evidence="1">
    <location>
        <position position="126"/>
    </location>
    <ligand>
        <name>a divalent metal cation</name>
        <dbReference type="ChEBI" id="CHEBI:60240"/>
        <label>1</label>
    </ligand>
</feature>
<feature type="binding site" evidence="1">
    <location>
        <position position="126"/>
    </location>
    <ligand>
        <name>a divalent metal cation</name>
        <dbReference type="ChEBI" id="CHEBI:60240"/>
        <label>2</label>
    </ligand>
</feature>
<feature type="binding site" evidence="1">
    <location>
        <position position="180"/>
    </location>
    <ligand>
        <name>a divalent metal cation</name>
        <dbReference type="ChEBI" id="CHEBI:60240"/>
        <label>2</label>
    </ligand>
</feature>
<feature type="binding site" evidence="1">
    <location>
        <position position="207"/>
    </location>
    <ligand>
        <name>a divalent metal cation</name>
        <dbReference type="ChEBI" id="CHEBI:60240"/>
        <label>2</label>
    </ligand>
</feature>
<feature type="binding site" evidence="1">
    <location>
        <position position="262"/>
    </location>
    <ligand>
        <name>a divalent metal cation</name>
        <dbReference type="ChEBI" id="CHEBI:60240"/>
        <label>1</label>
    </ligand>
</feature>
<feature type="sequence conflict" description="In Ref. 1; AAA35223." evidence="3" ref="1">
    <original>G</original>
    <variation>R</variation>
    <location>
        <position position="24"/>
    </location>
</feature>
<feature type="sequence conflict" description="In Ref. 2; CAA89245." evidence="3" ref="2">
    <original>C</original>
    <variation>W</variation>
    <location>
        <position position="167"/>
    </location>
</feature>
<protein>
    <recommendedName>
        <fullName>Uncharacterized deoxyribonuclease YMR262W</fullName>
        <ecNumber>3.1.21.-</ecNumber>
    </recommendedName>
</protein>
<organism>
    <name type="scientific">Saccharomyces cerevisiae (strain ATCC 204508 / S288c)</name>
    <name type="common">Baker's yeast</name>
    <dbReference type="NCBI Taxonomy" id="559292"/>
    <lineage>
        <taxon>Eukaryota</taxon>
        <taxon>Fungi</taxon>
        <taxon>Dikarya</taxon>
        <taxon>Ascomycota</taxon>
        <taxon>Saccharomycotina</taxon>
        <taxon>Saccharomycetes</taxon>
        <taxon>Saccharomycetales</taxon>
        <taxon>Saccharomycetaceae</taxon>
        <taxon>Saccharomyces</taxon>
    </lineage>
</organism>
<reference key="1">
    <citation type="submission" date="1992-06" db="EMBL/GenBank/DDBJ databases">
        <authorList>
            <person name="Manning A.M."/>
            <person name="Rosenbloom C.L."/>
            <person name="Beaudet A.L."/>
        </authorList>
    </citation>
    <scope>NUCLEOTIDE SEQUENCE [GENOMIC DNA]</scope>
</reference>
<reference key="2">
    <citation type="journal article" date="1997" name="Nature">
        <title>The nucleotide sequence of Saccharomyces cerevisiae chromosome XIII.</title>
        <authorList>
            <person name="Bowman S."/>
            <person name="Churcher C.M."/>
            <person name="Badcock K."/>
            <person name="Brown D."/>
            <person name="Chillingworth T."/>
            <person name="Connor R."/>
            <person name="Dedman K."/>
            <person name="Devlin K."/>
            <person name="Gentles S."/>
            <person name="Hamlin N."/>
            <person name="Hunt S."/>
            <person name="Jagels K."/>
            <person name="Lye G."/>
            <person name="Moule S."/>
            <person name="Odell C."/>
            <person name="Pearson D."/>
            <person name="Rajandream M.A."/>
            <person name="Rice P."/>
            <person name="Skelton J."/>
            <person name="Walsh S.V."/>
            <person name="Whitehead S."/>
            <person name="Barrell B.G."/>
        </authorList>
    </citation>
    <scope>NUCLEOTIDE SEQUENCE [LARGE SCALE GENOMIC DNA]</scope>
    <source>
        <strain>ATCC 204508 / S288c</strain>
    </source>
</reference>
<reference key="3">
    <citation type="journal article" date="2014" name="G3 (Bethesda)">
        <title>The reference genome sequence of Saccharomyces cerevisiae: Then and now.</title>
        <authorList>
            <person name="Engel S.R."/>
            <person name="Dietrich F.S."/>
            <person name="Fisk D.G."/>
            <person name="Binkley G."/>
            <person name="Balakrishnan R."/>
            <person name="Costanzo M.C."/>
            <person name="Dwight S.S."/>
            <person name="Hitz B.C."/>
            <person name="Karra K."/>
            <person name="Nash R.S."/>
            <person name="Weng S."/>
            <person name="Wong E.D."/>
            <person name="Lloyd P."/>
            <person name="Skrzypek M.S."/>
            <person name="Miyasato S.R."/>
            <person name="Simison M."/>
            <person name="Cherry J.M."/>
        </authorList>
    </citation>
    <scope>GENOME REANNOTATION</scope>
    <scope>SEQUENCE REVISION TO 167</scope>
    <source>
        <strain>ATCC 204508 / S288c</strain>
    </source>
</reference>
<reference key="4">
    <citation type="journal article" date="2007" name="Genome Res.">
        <title>Approaching a complete repository of sequence-verified protein-encoding clones for Saccharomyces cerevisiae.</title>
        <authorList>
            <person name="Hu Y."/>
            <person name="Rolfs A."/>
            <person name="Bhullar B."/>
            <person name="Murthy T.V.S."/>
            <person name="Zhu C."/>
            <person name="Berger M.F."/>
            <person name="Camargo A.A."/>
            <person name="Kelley F."/>
            <person name="McCarron S."/>
            <person name="Jepson D."/>
            <person name="Richardson A."/>
            <person name="Raphael J."/>
            <person name="Moreira D."/>
            <person name="Taycher E."/>
            <person name="Zuo D."/>
            <person name="Mohr S."/>
            <person name="Kane M.F."/>
            <person name="Williamson J."/>
            <person name="Simpson A.J.G."/>
            <person name="Bulyk M.L."/>
            <person name="Harlow E."/>
            <person name="Marsischky G."/>
            <person name="Kolodner R.D."/>
            <person name="LaBaer J."/>
        </authorList>
    </citation>
    <scope>NUCLEOTIDE SEQUENCE [GENOMIC DNA]</scope>
    <source>
        <strain>ATCC 204508 / S288c</strain>
    </source>
</reference>
<reference key="5">
    <citation type="journal article" date="2003" name="Nature">
        <title>Global analysis of protein expression in yeast.</title>
        <authorList>
            <person name="Ghaemmaghami S."/>
            <person name="Huh W.-K."/>
            <person name="Bower K."/>
            <person name="Howson R.W."/>
            <person name="Belle A."/>
            <person name="Dephoure N."/>
            <person name="O'Shea E.K."/>
            <person name="Weissman J.S."/>
        </authorList>
    </citation>
    <scope>LEVEL OF PROTEIN EXPRESSION [LARGE SCALE ANALYSIS]</scope>
</reference>
<proteinExistence type="evidence at protein level"/>
<name>YM8C_YEAST</name>